<evidence type="ECO:0000250" key="1">
    <source>
        <dbReference type="UniProtKB" id="Q9ERF3"/>
    </source>
</evidence>
<evidence type="ECO:0000250" key="2">
    <source>
        <dbReference type="UniProtKB" id="Q9GZS3"/>
    </source>
</evidence>
<evidence type="ECO:0000269" key="3">
    <source ref="2"/>
</evidence>
<evidence type="ECO:0000305" key="4"/>
<proteinExistence type="evidence at protein level"/>
<reference key="1">
    <citation type="journal article" date="2004" name="Genome Res.">
        <title>The status, quality, and expansion of the NIH full-length cDNA project: the Mammalian Gene Collection (MGC).</title>
        <authorList>
            <consortium name="The MGC Project Team"/>
        </authorList>
    </citation>
    <scope>NUCLEOTIDE SEQUENCE [LARGE SCALE MRNA]</scope>
    <source>
        <tissue>Placenta</tissue>
    </source>
</reference>
<reference key="2">
    <citation type="submission" date="2007-02" db="UniProtKB">
        <authorList>
            <person name="Lubec G."/>
            <person name="Chen W.-Q."/>
        </authorList>
    </citation>
    <scope>ACETYLATION AT THR-2</scope>
    <scope>IDENTIFICATION BY MASS SPECTROMETRY</scope>
</reference>
<accession>Q4V7A0</accession>
<comment type="function">
    <text evidence="2">Component of the PAF1 complex (PAF1C) which has multiple functions during transcription by RNA polymerase II and is implicated in regulation of development and maintenance of embryonic stem cell pluripotency. PAF1C associates with RNA polymerase II through interaction with POLR2A CTD non-phosphorylated and 'Ser-2'- and 'Ser-5'-phosphorylated forms and is involved in transcriptional elongation, acting both independently and synergistically with TCEA1 and in cooperation with the DSIF complex and HTATSF1. PAF1C is required for transcription of Hox and Wnt target genes. PAF1C is involved in hematopoiesis and stimulates transcriptional activity of KMT2A/MLL1; it promotes leukemogenesis through association with KMT2A/MLL1-rearranged oncoproteins, such as KMT2A/MLL1-MLLT3/AF9 and KMT2A/MLL1-MLLT1/ENL. PAF1C is involved in histone modifications such as ubiquitination of histone H2B and methylation on histone H3 'Lys-4' (H3K4me3). PAF1C recruits the RNF20/40 E3 ubiquitin-protein ligase complex and the E2 enzyme UBE2A or UBE2B to chromatin which mediate monoubiquitination of 'Lys-120' of histone H2B (H2BK120ub1); UB2A/B-mediated H2B ubiquitination is proposed to be coupled to transcription. PAF1C is involved in mRNA 3' end formation probably through association with cleavage and poly(A) factors. In case of infection by influenza A strain H3N2, PAF1C associates with viral NS1 protein, thereby regulating gene transcription. Required for mono- and trimethylation on histone H3 'Lys-4' (H3K4me3), dimethylation on histone H3 'Lys-79' (H3K4me3). Required for Hox gene transcription. Also acts as a component of the SKI complex, a multiprotein complex that assists the RNA-degrading exosome during the mRNA decay and quality-control pathways. The SKI complex catalyzes mRNA extraction from 80S ribosomal complexes in the 3'-5' direction and channels mRNA to the cytosolic exosome for degradation. SKI-mediated extraction of mRNA from stalled ribosomes allow binding of the Pelota-HBS1L complex and subsequent ribosome disassembly by ABCE1 for ribosome recycling.</text>
</comment>
<comment type="subunit">
    <text evidence="1 2">Component of the PAF1 complex, which consists of CDC73, PAF1, LEO1, CTR9, RTF1 and SKIC8 (By similarity). The PAF1 complex interacts with PHF5A. Within the PAF1 complex interacts directly with PHF5A (By similarity). Component of the SKI complex which consists of SKIC2, SKIC3 and SKIC8 (By similarity).</text>
</comment>
<comment type="subcellular location">
    <subcellularLocation>
        <location evidence="2">Nucleus</location>
    </subcellularLocation>
    <subcellularLocation>
        <location evidence="2">Cytoplasm</location>
    </subcellularLocation>
</comment>
<comment type="similarity">
    <text evidence="4">Belongs to the SKI8 family.</text>
</comment>
<keyword id="KW-0007">Acetylation</keyword>
<keyword id="KW-0963">Cytoplasm</keyword>
<keyword id="KW-0539">Nucleus</keyword>
<keyword id="KW-1185">Reference proteome</keyword>
<keyword id="KW-0677">Repeat</keyword>
<keyword id="KW-0804">Transcription</keyword>
<keyword id="KW-0805">Transcription regulation</keyword>
<keyword id="KW-0853">WD repeat</keyword>
<keyword id="KW-0879">Wnt signaling pathway</keyword>
<gene>
    <name type="primary">Skic8</name>
    <name type="synonym">Wdr61</name>
</gene>
<sequence length="305" mass="33747">MTNQYSILFKQEQAHDDAIWSVAWETNKKENIETVVTGSLDDLVKVWKWRDERLELQWSLEGHQLGVVSVDISHTLPIAASSSLDAHIRLWDLENGKQMKSIDAGPVDAWTLAFSPDSQHLATGTHMGKVNIFGVESGKKEYSLDTRGKFILSIAYSPDGKYLASGAIDGIINIFDIATGKLLHTLEGHAMPIRSLTFSPDSQLLVTASDDGYIKIYDVQHANLAGTLSGHASWVLNVAFCPDDTHFVSSSSDKSVKVWDVGTRTCIHTFFDHQDQVWGVKYNGNGSKIVSVGDDQEIHVYDCPI</sequence>
<organism>
    <name type="scientific">Rattus norvegicus</name>
    <name type="common">Rat</name>
    <dbReference type="NCBI Taxonomy" id="10116"/>
    <lineage>
        <taxon>Eukaryota</taxon>
        <taxon>Metazoa</taxon>
        <taxon>Chordata</taxon>
        <taxon>Craniata</taxon>
        <taxon>Vertebrata</taxon>
        <taxon>Euteleostomi</taxon>
        <taxon>Mammalia</taxon>
        <taxon>Eutheria</taxon>
        <taxon>Euarchontoglires</taxon>
        <taxon>Glires</taxon>
        <taxon>Rodentia</taxon>
        <taxon>Myomorpha</taxon>
        <taxon>Muroidea</taxon>
        <taxon>Muridae</taxon>
        <taxon>Murinae</taxon>
        <taxon>Rattus</taxon>
    </lineage>
</organism>
<dbReference type="EMBL" id="BC098059">
    <property type="protein sequence ID" value="AAH98059.1"/>
    <property type="molecule type" value="mRNA"/>
</dbReference>
<dbReference type="RefSeq" id="NP_001020914.1">
    <property type="nucleotide sequence ID" value="NM_001025743.1"/>
</dbReference>
<dbReference type="RefSeq" id="XP_006243147.1">
    <property type="nucleotide sequence ID" value="XM_006243085.5"/>
</dbReference>
<dbReference type="RefSeq" id="XP_006243148.1">
    <property type="nucleotide sequence ID" value="XM_006243086.4"/>
</dbReference>
<dbReference type="RefSeq" id="XP_038937659.1">
    <property type="nucleotide sequence ID" value="XM_039081731.2"/>
</dbReference>
<dbReference type="SMR" id="Q4V7A0"/>
<dbReference type="STRING" id="10116.ENSRNOP00000017239"/>
<dbReference type="PhosphoSitePlus" id="Q4V7A0"/>
<dbReference type="jPOST" id="Q4V7A0"/>
<dbReference type="PaxDb" id="10116-ENSRNOP00000017239"/>
<dbReference type="GeneID" id="363064"/>
<dbReference type="KEGG" id="rno:363064"/>
<dbReference type="UCSC" id="RGD:1308228">
    <property type="organism name" value="rat"/>
</dbReference>
<dbReference type="AGR" id="RGD:1308228"/>
<dbReference type="CTD" id="80349"/>
<dbReference type="RGD" id="1308228">
    <property type="gene designation" value="Skic8"/>
</dbReference>
<dbReference type="VEuPathDB" id="HostDB:ENSRNOG00000012803"/>
<dbReference type="eggNOG" id="KOG4155">
    <property type="taxonomic scope" value="Eukaryota"/>
</dbReference>
<dbReference type="HOGENOM" id="CLU_000288_57_11_1"/>
<dbReference type="InParanoid" id="Q4V7A0"/>
<dbReference type="PhylomeDB" id="Q4V7A0"/>
<dbReference type="Reactome" id="R-RNO-112382">
    <property type="pathway name" value="Formation of RNA Pol II elongation complex"/>
</dbReference>
<dbReference type="Reactome" id="R-RNO-429958">
    <property type="pathway name" value="mRNA decay by 3' to 5' exoribonuclease"/>
</dbReference>
<dbReference type="Reactome" id="R-RNO-674695">
    <property type="pathway name" value="RNA Polymerase II Pre-transcription Events"/>
</dbReference>
<dbReference type="Reactome" id="R-RNO-75955">
    <property type="pathway name" value="RNA Polymerase II Transcription Elongation"/>
</dbReference>
<dbReference type="Reactome" id="R-RNO-8866654">
    <property type="pathway name" value="E3 ubiquitin ligases ubiquitinate target proteins"/>
</dbReference>
<dbReference type="PRO" id="PR:Q4V7A0"/>
<dbReference type="Proteomes" id="UP000002494">
    <property type="component" value="Chromosome 8"/>
</dbReference>
<dbReference type="Bgee" id="ENSRNOG00000012803">
    <property type="expression patterns" value="Expressed in stomach and 20 other cell types or tissues"/>
</dbReference>
<dbReference type="ExpressionAtlas" id="Q4V7A0">
    <property type="expression patterns" value="baseline and differential"/>
</dbReference>
<dbReference type="GO" id="GO:0016593">
    <property type="term" value="C:Cdc73/Paf1 complex"/>
    <property type="evidence" value="ECO:0000250"/>
    <property type="project" value="UniProtKB"/>
</dbReference>
<dbReference type="GO" id="GO:0005737">
    <property type="term" value="C:cytoplasm"/>
    <property type="evidence" value="ECO:0000250"/>
    <property type="project" value="UniProtKB"/>
</dbReference>
<dbReference type="GO" id="GO:0000791">
    <property type="term" value="C:euchromatin"/>
    <property type="evidence" value="ECO:0000250"/>
    <property type="project" value="UniProtKB"/>
</dbReference>
<dbReference type="GO" id="GO:0005634">
    <property type="term" value="C:nucleus"/>
    <property type="evidence" value="ECO:0000250"/>
    <property type="project" value="UniProtKB"/>
</dbReference>
<dbReference type="GO" id="GO:0055087">
    <property type="term" value="C:Ski complex"/>
    <property type="evidence" value="ECO:0000250"/>
    <property type="project" value="UniProtKB"/>
</dbReference>
<dbReference type="GO" id="GO:0045638">
    <property type="term" value="P:negative regulation of myeloid cell differentiation"/>
    <property type="evidence" value="ECO:0000250"/>
    <property type="project" value="UniProtKB"/>
</dbReference>
<dbReference type="GO" id="GO:0070478">
    <property type="term" value="P:nuclear-transcribed mRNA catabolic process, 3'-5' exonucleolytic nonsense-mediated decay"/>
    <property type="evidence" value="ECO:0000250"/>
    <property type="project" value="UniProtKB"/>
</dbReference>
<dbReference type="GO" id="GO:0072344">
    <property type="term" value="P:rescue of stalled ribosome"/>
    <property type="evidence" value="ECO:0000250"/>
    <property type="project" value="UniProtKB"/>
</dbReference>
<dbReference type="GO" id="GO:0006368">
    <property type="term" value="P:transcription elongation by RNA polymerase II"/>
    <property type="evidence" value="ECO:0000250"/>
    <property type="project" value="UniProtKB"/>
</dbReference>
<dbReference type="GO" id="GO:0016055">
    <property type="term" value="P:Wnt signaling pathway"/>
    <property type="evidence" value="ECO:0007669"/>
    <property type="project" value="UniProtKB-KW"/>
</dbReference>
<dbReference type="CDD" id="cd00200">
    <property type="entry name" value="WD40"/>
    <property type="match status" value="1"/>
</dbReference>
<dbReference type="FunFam" id="2.130.10.10:FF:000094">
    <property type="entry name" value="WD repeat-containing protein 61"/>
    <property type="match status" value="1"/>
</dbReference>
<dbReference type="Gene3D" id="2.130.10.10">
    <property type="entry name" value="YVTN repeat-like/Quinoprotein amine dehydrogenase"/>
    <property type="match status" value="1"/>
</dbReference>
<dbReference type="InterPro" id="IPR020472">
    <property type="entry name" value="G-protein_beta_WD-40_rep"/>
</dbReference>
<dbReference type="InterPro" id="IPR051510">
    <property type="entry name" value="SKI8"/>
</dbReference>
<dbReference type="InterPro" id="IPR015943">
    <property type="entry name" value="WD40/YVTN_repeat-like_dom_sf"/>
</dbReference>
<dbReference type="InterPro" id="IPR019775">
    <property type="entry name" value="WD40_repeat_CS"/>
</dbReference>
<dbReference type="InterPro" id="IPR036322">
    <property type="entry name" value="WD40_repeat_dom_sf"/>
</dbReference>
<dbReference type="InterPro" id="IPR001680">
    <property type="entry name" value="WD40_rpt"/>
</dbReference>
<dbReference type="PANTHER" id="PTHR44090:SF1">
    <property type="entry name" value="SUPERKILLER COMPLEX PROTEIN 8"/>
    <property type="match status" value="1"/>
</dbReference>
<dbReference type="PANTHER" id="PTHR44090">
    <property type="entry name" value="WD REPEAT-CONTAINING PROTEIN 61"/>
    <property type="match status" value="1"/>
</dbReference>
<dbReference type="Pfam" id="PF00400">
    <property type="entry name" value="WD40"/>
    <property type="match status" value="7"/>
</dbReference>
<dbReference type="PRINTS" id="PR00320">
    <property type="entry name" value="GPROTEINBRPT"/>
</dbReference>
<dbReference type="SMART" id="SM00320">
    <property type="entry name" value="WD40"/>
    <property type="match status" value="7"/>
</dbReference>
<dbReference type="SUPFAM" id="SSF50978">
    <property type="entry name" value="WD40 repeat-like"/>
    <property type="match status" value="1"/>
</dbReference>
<dbReference type="PROSITE" id="PS00678">
    <property type="entry name" value="WD_REPEATS_1"/>
    <property type="match status" value="1"/>
</dbReference>
<dbReference type="PROSITE" id="PS50082">
    <property type="entry name" value="WD_REPEATS_2"/>
    <property type="match status" value="6"/>
</dbReference>
<dbReference type="PROSITE" id="PS50294">
    <property type="entry name" value="WD_REPEATS_REGION"/>
    <property type="match status" value="1"/>
</dbReference>
<protein>
    <recommendedName>
        <fullName>Superkiller complex protein 8</fullName>
        <shortName>Ski8</shortName>
    </recommendedName>
    <alternativeName>
        <fullName>WD repeat-containing protein 61</fullName>
    </alternativeName>
    <component>
        <recommendedName>
            <fullName>Superkiller complex protein 8, N-terminally processed</fullName>
        </recommendedName>
        <alternativeName>
            <fullName>WD repeat-containing protein 61, N-terminally processed</fullName>
        </alternativeName>
    </component>
</protein>
<feature type="chain" id="PRO_0000425750" description="Superkiller complex protein 8">
    <location>
        <begin position="1"/>
        <end position="305"/>
    </location>
</feature>
<feature type="initiator methionine" description="Removed; alternate" evidence="3">
    <location>
        <position position="1"/>
    </location>
</feature>
<feature type="chain" id="PRO_0000245853" description="Superkiller complex protein 8, N-terminally processed">
    <location>
        <begin position="2"/>
        <end position="305"/>
    </location>
</feature>
<feature type="repeat" description="WD 1">
    <location>
        <begin position="14"/>
        <end position="57"/>
    </location>
</feature>
<feature type="repeat" description="WD 2">
    <location>
        <begin position="62"/>
        <end position="101"/>
    </location>
</feature>
<feature type="repeat" description="WD 3">
    <location>
        <begin position="104"/>
        <end position="143"/>
    </location>
</feature>
<feature type="repeat" description="WD 4">
    <location>
        <begin position="146"/>
        <end position="187"/>
    </location>
</feature>
<feature type="repeat" description="WD 5">
    <location>
        <begin position="188"/>
        <end position="227"/>
    </location>
</feature>
<feature type="repeat" description="WD 6">
    <location>
        <begin position="230"/>
        <end position="269"/>
    </location>
</feature>
<feature type="repeat" description="WD 7">
    <location>
        <begin position="272"/>
        <end position="305"/>
    </location>
</feature>
<feature type="modified residue" description="N-acetylmethionine" evidence="2">
    <location>
        <position position="1"/>
    </location>
</feature>
<feature type="modified residue" description="N-acetylthreonine; in WD repeat-containing protein 61, N-terminally processed" evidence="3">
    <location>
        <position position="2"/>
    </location>
</feature>
<name>SKI8_RAT</name>